<name>CDSA_STAEQ</name>
<gene>
    <name type="primary">cdsA</name>
    <name type="ordered locus">SERP0828</name>
</gene>
<dbReference type="EC" id="2.7.7.41"/>
<dbReference type="EMBL" id="CP000029">
    <property type="protein sequence ID" value="AAW54181.1"/>
    <property type="molecule type" value="Genomic_DNA"/>
</dbReference>
<dbReference type="RefSeq" id="WP_001829499.1">
    <property type="nucleotide sequence ID" value="NC_002976.3"/>
</dbReference>
<dbReference type="SMR" id="Q5HPT0"/>
<dbReference type="STRING" id="176279.SERP0828"/>
<dbReference type="KEGG" id="ser:SERP0828"/>
<dbReference type="eggNOG" id="COG4589">
    <property type="taxonomic scope" value="Bacteria"/>
</dbReference>
<dbReference type="HOGENOM" id="CLU_037294_2_2_9"/>
<dbReference type="UniPathway" id="UPA00557">
    <property type="reaction ID" value="UER00614"/>
</dbReference>
<dbReference type="Proteomes" id="UP000000531">
    <property type="component" value="Chromosome"/>
</dbReference>
<dbReference type="GO" id="GO:0005886">
    <property type="term" value="C:plasma membrane"/>
    <property type="evidence" value="ECO:0007669"/>
    <property type="project" value="UniProtKB-SubCell"/>
</dbReference>
<dbReference type="GO" id="GO:0004605">
    <property type="term" value="F:phosphatidate cytidylyltransferase activity"/>
    <property type="evidence" value="ECO:0007669"/>
    <property type="project" value="UniProtKB-EC"/>
</dbReference>
<dbReference type="GO" id="GO:0016024">
    <property type="term" value="P:CDP-diacylglycerol biosynthetic process"/>
    <property type="evidence" value="ECO:0007669"/>
    <property type="project" value="UniProtKB-UniPathway"/>
</dbReference>
<dbReference type="InterPro" id="IPR000374">
    <property type="entry name" value="PC_trans"/>
</dbReference>
<dbReference type="PANTHER" id="PTHR46382">
    <property type="entry name" value="PHOSPHATIDATE CYTIDYLYLTRANSFERASE"/>
    <property type="match status" value="1"/>
</dbReference>
<dbReference type="PANTHER" id="PTHR46382:SF1">
    <property type="entry name" value="PHOSPHATIDATE CYTIDYLYLTRANSFERASE"/>
    <property type="match status" value="1"/>
</dbReference>
<dbReference type="Pfam" id="PF01148">
    <property type="entry name" value="CTP_transf_1"/>
    <property type="match status" value="1"/>
</dbReference>
<dbReference type="PROSITE" id="PS01315">
    <property type="entry name" value="CDS"/>
    <property type="match status" value="1"/>
</dbReference>
<accession>Q5HPT0</accession>
<sequence length="260" mass="29179">MKVRTLTAIIALLIFLPILLKGGLILMLFAFLLALIALKELLNMNMIKFLSIPGLISALALIIIMLPQDAGEWVQVIQLKGLIAMSFIVLSYTVLSKNRFSFMDAAFCLMSVAYVGIGFMYFYETRSEGLRYILFAFLIVWLTDTGAYIFGRLMGKHKLWPVISPNKTIEGFFGGILCSILVPLVMQMFVDLHMNIWLLLLVTIVLSMFGQLGDLVESGFKRHFGVKDSGRILPGHGGILDRFDSFMFVLPLLNILLIQT</sequence>
<protein>
    <recommendedName>
        <fullName>Phosphatidate cytidylyltransferase</fullName>
        <ecNumber>2.7.7.41</ecNumber>
    </recommendedName>
    <alternativeName>
        <fullName>CDP-DAG synthase</fullName>
    </alternativeName>
    <alternativeName>
        <fullName>CDP-DG synthase</fullName>
    </alternativeName>
    <alternativeName>
        <fullName>CDP-diacylglycerol synthase</fullName>
        <shortName>CDS</shortName>
    </alternativeName>
    <alternativeName>
        <fullName>CDP-diglyceride pyrophosphorylase</fullName>
    </alternativeName>
    <alternativeName>
        <fullName>CDP-diglyceride synthase</fullName>
    </alternativeName>
    <alternativeName>
        <fullName>CTP:phosphatidate cytidylyltransferase</fullName>
    </alternativeName>
</protein>
<proteinExistence type="inferred from homology"/>
<feature type="chain" id="PRO_0000090754" description="Phosphatidate cytidylyltransferase">
    <location>
        <begin position="1"/>
        <end position="260"/>
    </location>
</feature>
<feature type="transmembrane region" description="Helical" evidence="2">
    <location>
        <begin position="9"/>
        <end position="29"/>
    </location>
</feature>
<feature type="transmembrane region" description="Helical" evidence="2">
    <location>
        <begin position="46"/>
        <end position="66"/>
    </location>
</feature>
<feature type="transmembrane region" description="Helical" evidence="2">
    <location>
        <begin position="70"/>
        <end position="90"/>
    </location>
</feature>
<feature type="transmembrane region" description="Helical" evidence="2">
    <location>
        <begin position="102"/>
        <end position="122"/>
    </location>
</feature>
<feature type="transmembrane region" description="Helical" evidence="2">
    <location>
        <begin position="130"/>
        <end position="150"/>
    </location>
</feature>
<feature type="transmembrane region" description="Helical" evidence="2">
    <location>
        <begin position="172"/>
        <end position="192"/>
    </location>
</feature>
<feature type="transmembrane region" description="Helical" evidence="2">
    <location>
        <begin position="196"/>
        <end position="216"/>
    </location>
</feature>
<organism>
    <name type="scientific">Staphylococcus epidermidis (strain ATCC 35984 / DSM 28319 / BCRC 17069 / CCUG 31568 / BM 3577 / RP62A)</name>
    <dbReference type="NCBI Taxonomy" id="176279"/>
    <lineage>
        <taxon>Bacteria</taxon>
        <taxon>Bacillati</taxon>
        <taxon>Bacillota</taxon>
        <taxon>Bacilli</taxon>
        <taxon>Bacillales</taxon>
        <taxon>Staphylococcaceae</taxon>
        <taxon>Staphylococcus</taxon>
    </lineage>
</organism>
<keyword id="KW-1003">Cell membrane</keyword>
<keyword id="KW-0444">Lipid biosynthesis</keyword>
<keyword id="KW-0443">Lipid metabolism</keyword>
<keyword id="KW-0472">Membrane</keyword>
<keyword id="KW-0548">Nucleotidyltransferase</keyword>
<keyword id="KW-0594">Phospholipid biosynthesis</keyword>
<keyword id="KW-1208">Phospholipid metabolism</keyword>
<keyword id="KW-1185">Reference proteome</keyword>
<keyword id="KW-0808">Transferase</keyword>
<keyword id="KW-0812">Transmembrane</keyword>
<keyword id="KW-1133">Transmembrane helix</keyword>
<evidence type="ECO:0000250" key="1"/>
<evidence type="ECO:0000255" key="2"/>
<evidence type="ECO:0000305" key="3"/>
<comment type="catalytic activity">
    <reaction>
        <text>a 1,2-diacyl-sn-glycero-3-phosphate + CTP + H(+) = a CDP-1,2-diacyl-sn-glycerol + diphosphate</text>
        <dbReference type="Rhea" id="RHEA:16229"/>
        <dbReference type="ChEBI" id="CHEBI:15378"/>
        <dbReference type="ChEBI" id="CHEBI:33019"/>
        <dbReference type="ChEBI" id="CHEBI:37563"/>
        <dbReference type="ChEBI" id="CHEBI:58332"/>
        <dbReference type="ChEBI" id="CHEBI:58608"/>
        <dbReference type="EC" id="2.7.7.41"/>
    </reaction>
</comment>
<comment type="pathway">
    <text>Phospholipid metabolism; CDP-diacylglycerol biosynthesis; CDP-diacylglycerol from sn-glycerol 3-phosphate: step 3/3.</text>
</comment>
<comment type="subcellular location">
    <subcellularLocation>
        <location evidence="1">Cell membrane</location>
        <topology evidence="1">Multi-pass membrane protein</topology>
    </subcellularLocation>
</comment>
<comment type="similarity">
    <text evidence="3">Belongs to the CDS family.</text>
</comment>
<reference key="1">
    <citation type="journal article" date="2005" name="J. Bacteriol.">
        <title>Insights on evolution of virulence and resistance from the complete genome analysis of an early methicillin-resistant Staphylococcus aureus strain and a biofilm-producing methicillin-resistant Staphylococcus epidermidis strain.</title>
        <authorList>
            <person name="Gill S.R."/>
            <person name="Fouts D.E."/>
            <person name="Archer G.L."/>
            <person name="Mongodin E.F."/>
            <person name="DeBoy R.T."/>
            <person name="Ravel J."/>
            <person name="Paulsen I.T."/>
            <person name="Kolonay J.F."/>
            <person name="Brinkac L.M."/>
            <person name="Beanan M.J."/>
            <person name="Dodson R.J."/>
            <person name="Daugherty S.C."/>
            <person name="Madupu R."/>
            <person name="Angiuoli S.V."/>
            <person name="Durkin A.S."/>
            <person name="Haft D.H."/>
            <person name="Vamathevan J.J."/>
            <person name="Khouri H."/>
            <person name="Utterback T.R."/>
            <person name="Lee C."/>
            <person name="Dimitrov G."/>
            <person name="Jiang L."/>
            <person name="Qin H."/>
            <person name="Weidman J."/>
            <person name="Tran K."/>
            <person name="Kang K.H."/>
            <person name="Hance I.R."/>
            <person name="Nelson K.E."/>
            <person name="Fraser C.M."/>
        </authorList>
    </citation>
    <scope>NUCLEOTIDE SEQUENCE [LARGE SCALE GENOMIC DNA]</scope>
    <source>
        <strain>ATCC 35984 / DSM 28319 / BCRC 17069 / CCUG 31568 / BM 3577 / RP62A</strain>
    </source>
</reference>